<name>PYRG_STAAN</name>
<accession>P99072</accession>
<accession>Q99SD1</accession>
<keyword id="KW-0067">ATP-binding</keyword>
<keyword id="KW-0315">Glutamine amidotransferase</keyword>
<keyword id="KW-0436">Ligase</keyword>
<keyword id="KW-0460">Magnesium</keyword>
<keyword id="KW-0479">Metal-binding</keyword>
<keyword id="KW-0547">Nucleotide-binding</keyword>
<keyword id="KW-0665">Pyrimidine biosynthesis</keyword>
<sequence>MTKFIFVTGGVVSSLGKGITASSLGRLLKDRGLNVTIQKFDPYLNVDPGTMSPYQHGEVFVTDDGAETDLDLGHYERFIDINLNKFSNVTAGKVYSHVLKKERRGDYLGGTVQVIPHITNEIKERLLLAGESTNADVVITEIGGTTGDIESLPFIEAIRQIRSDLGRENVMYVHCTLLPYIKAAGEMKTKPTQHSVKELRGLGIQPDLIVVRTEYEMTQDLKDKIALFCDINKESVIECRDADSLYEIPLQLSQQNMDDIVIKRLQLNAKYETQLDEWKQLLDIVNNLDGKITIGLVGKYVSLQDAYLSVVESLKHAGYPFAKDIDIRWIDSSEVTDENAAEYLADVDGILVPGGFGFRASEGKISAIKYARENNVPFFGICLGMQLATVEFSRNVLGLEGAHSAELDPATPYPIIDLLPEQKDIEDLGGTLRLGLYPCSIKEGTLAQDVYGKAEIEERHRHRYEFNNDYREQLEANGMVISGTSPDGRLVEMVEIPTNDFFIACQFHPEFLSRPNRPHPIFKSFIEASLKYQQNK</sequence>
<dbReference type="EC" id="6.3.4.2" evidence="1"/>
<dbReference type="EMBL" id="BA000018">
    <property type="protein sequence ID" value="BAB43213.1"/>
    <property type="molecule type" value="Genomic_DNA"/>
</dbReference>
<dbReference type="PIR" id="D90006">
    <property type="entry name" value="D90006"/>
</dbReference>
<dbReference type="RefSeq" id="WP_000159960.1">
    <property type="nucleotide sequence ID" value="NC_002745.2"/>
</dbReference>
<dbReference type="SMR" id="P99072"/>
<dbReference type="EnsemblBacteria" id="BAB43213">
    <property type="protein sequence ID" value="BAB43213"/>
    <property type="gene ID" value="BAB43213"/>
</dbReference>
<dbReference type="KEGG" id="sau:SA1929"/>
<dbReference type="HOGENOM" id="CLU_011675_5_0_9"/>
<dbReference type="UniPathway" id="UPA00159">
    <property type="reaction ID" value="UER00277"/>
</dbReference>
<dbReference type="GO" id="GO:0005829">
    <property type="term" value="C:cytosol"/>
    <property type="evidence" value="ECO:0007669"/>
    <property type="project" value="TreeGrafter"/>
</dbReference>
<dbReference type="GO" id="GO:0005524">
    <property type="term" value="F:ATP binding"/>
    <property type="evidence" value="ECO:0007669"/>
    <property type="project" value="UniProtKB-KW"/>
</dbReference>
<dbReference type="GO" id="GO:0003883">
    <property type="term" value="F:CTP synthase activity"/>
    <property type="evidence" value="ECO:0007669"/>
    <property type="project" value="UniProtKB-UniRule"/>
</dbReference>
<dbReference type="GO" id="GO:0004359">
    <property type="term" value="F:glutaminase activity"/>
    <property type="evidence" value="ECO:0007669"/>
    <property type="project" value="RHEA"/>
</dbReference>
<dbReference type="GO" id="GO:0042802">
    <property type="term" value="F:identical protein binding"/>
    <property type="evidence" value="ECO:0007669"/>
    <property type="project" value="TreeGrafter"/>
</dbReference>
<dbReference type="GO" id="GO:0046872">
    <property type="term" value="F:metal ion binding"/>
    <property type="evidence" value="ECO:0007669"/>
    <property type="project" value="UniProtKB-KW"/>
</dbReference>
<dbReference type="GO" id="GO:0044210">
    <property type="term" value="P:'de novo' CTP biosynthetic process"/>
    <property type="evidence" value="ECO:0007669"/>
    <property type="project" value="UniProtKB-UniRule"/>
</dbReference>
<dbReference type="GO" id="GO:0019856">
    <property type="term" value="P:pyrimidine nucleobase biosynthetic process"/>
    <property type="evidence" value="ECO:0007669"/>
    <property type="project" value="TreeGrafter"/>
</dbReference>
<dbReference type="CDD" id="cd03113">
    <property type="entry name" value="CTPS_N"/>
    <property type="match status" value="1"/>
</dbReference>
<dbReference type="CDD" id="cd01746">
    <property type="entry name" value="GATase1_CTP_Synthase"/>
    <property type="match status" value="1"/>
</dbReference>
<dbReference type="FunFam" id="3.40.50.300:FF:000009">
    <property type="entry name" value="CTP synthase"/>
    <property type="match status" value="1"/>
</dbReference>
<dbReference type="FunFam" id="3.40.50.880:FF:000002">
    <property type="entry name" value="CTP synthase"/>
    <property type="match status" value="1"/>
</dbReference>
<dbReference type="Gene3D" id="3.40.50.880">
    <property type="match status" value="1"/>
</dbReference>
<dbReference type="Gene3D" id="3.40.50.300">
    <property type="entry name" value="P-loop containing nucleotide triphosphate hydrolases"/>
    <property type="match status" value="1"/>
</dbReference>
<dbReference type="HAMAP" id="MF_01227">
    <property type="entry name" value="PyrG"/>
    <property type="match status" value="1"/>
</dbReference>
<dbReference type="InterPro" id="IPR029062">
    <property type="entry name" value="Class_I_gatase-like"/>
</dbReference>
<dbReference type="InterPro" id="IPR004468">
    <property type="entry name" value="CTP_synthase"/>
</dbReference>
<dbReference type="InterPro" id="IPR017456">
    <property type="entry name" value="CTP_synthase_N"/>
</dbReference>
<dbReference type="InterPro" id="IPR017926">
    <property type="entry name" value="GATASE"/>
</dbReference>
<dbReference type="InterPro" id="IPR033828">
    <property type="entry name" value="GATase1_CTP_Synthase"/>
</dbReference>
<dbReference type="InterPro" id="IPR027417">
    <property type="entry name" value="P-loop_NTPase"/>
</dbReference>
<dbReference type="NCBIfam" id="NF003792">
    <property type="entry name" value="PRK05380.1"/>
    <property type="match status" value="1"/>
</dbReference>
<dbReference type="NCBIfam" id="TIGR00337">
    <property type="entry name" value="PyrG"/>
    <property type="match status" value="1"/>
</dbReference>
<dbReference type="PANTHER" id="PTHR11550">
    <property type="entry name" value="CTP SYNTHASE"/>
    <property type="match status" value="1"/>
</dbReference>
<dbReference type="PANTHER" id="PTHR11550:SF0">
    <property type="entry name" value="CTP SYNTHASE-RELATED"/>
    <property type="match status" value="1"/>
</dbReference>
<dbReference type="Pfam" id="PF06418">
    <property type="entry name" value="CTP_synth_N"/>
    <property type="match status" value="1"/>
</dbReference>
<dbReference type="Pfam" id="PF00117">
    <property type="entry name" value="GATase"/>
    <property type="match status" value="1"/>
</dbReference>
<dbReference type="SUPFAM" id="SSF52317">
    <property type="entry name" value="Class I glutamine amidotransferase-like"/>
    <property type="match status" value="1"/>
</dbReference>
<dbReference type="SUPFAM" id="SSF52540">
    <property type="entry name" value="P-loop containing nucleoside triphosphate hydrolases"/>
    <property type="match status" value="1"/>
</dbReference>
<dbReference type="PROSITE" id="PS51273">
    <property type="entry name" value="GATASE_TYPE_1"/>
    <property type="match status" value="1"/>
</dbReference>
<gene>
    <name evidence="1" type="primary">pyrG</name>
    <name type="synonym">ctrA</name>
    <name type="ordered locus">SA1929</name>
</gene>
<feature type="chain" id="PRO_0000138224" description="CTP synthase">
    <location>
        <begin position="1"/>
        <end position="536"/>
    </location>
</feature>
<feature type="domain" description="Glutamine amidotransferase type-1" evidence="1">
    <location>
        <begin position="293"/>
        <end position="535"/>
    </location>
</feature>
<feature type="region of interest" description="Amidoligase domain" evidence="1">
    <location>
        <begin position="1"/>
        <end position="267"/>
    </location>
</feature>
<feature type="active site" description="Nucleophile; for glutamine hydrolysis" evidence="1">
    <location>
        <position position="382"/>
    </location>
</feature>
<feature type="active site" evidence="1">
    <location>
        <position position="508"/>
    </location>
</feature>
<feature type="active site" evidence="1">
    <location>
        <position position="510"/>
    </location>
</feature>
<feature type="binding site" evidence="1">
    <location>
        <position position="13"/>
    </location>
    <ligand>
        <name>CTP</name>
        <dbReference type="ChEBI" id="CHEBI:37563"/>
        <note>allosteric inhibitor</note>
    </ligand>
</feature>
<feature type="binding site" evidence="1">
    <location>
        <position position="13"/>
    </location>
    <ligand>
        <name>UTP</name>
        <dbReference type="ChEBI" id="CHEBI:46398"/>
    </ligand>
</feature>
<feature type="binding site" evidence="1">
    <location>
        <begin position="14"/>
        <end position="19"/>
    </location>
    <ligand>
        <name>ATP</name>
        <dbReference type="ChEBI" id="CHEBI:30616"/>
    </ligand>
</feature>
<feature type="binding site" evidence="1">
    <location>
        <position position="54"/>
    </location>
    <ligand>
        <name>L-glutamine</name>
        <dbReference type="ChEBI" id="CHEBI:58359"/>
    </ligand>
</feature>
<feature type="binding site" evidence="1">
    <location>
        <position position="71"/>
    </location>
    <ligand>
        <name>ATP</name>
        <dbReference type="ChEBI" id="CHEBI:30616"/>
    </ligand>
</feature>
<feature type="binding site" evidence="1">
    <location>
        <position position="71"/>
    </location>
    <ligand>
        <name>Mg(2+)</name>
        <dbReference type="ChEBI" id="CHEBI:18420"/>
    </ligand>
</feature>
<feature type="binding site" evidence="1">
    <location>
        <position position="141"/>
    </location>
    <ligand>
        <name>Mg(2+)</name>
        <dbReference type="ChEBI" id="CHEBI:18420"/>
    </ligand>
</feature>
<feature type="binding site" evidence="1">
    <location>
        <begin position="148"/>
        <end position="150"/>
    </location>
    <ligand>
        <name>CTP</name>
        <dbReference type="ChEBI" id="CHEBI:37563"/>
        <note>allosteric inhibitor</note>
    </ligand>
</feature>
<feature type="binding site" evidence="1">
    <location>
        <begin position="188"/>
        <end position="193"/>
    </location>
    <ligand>
        <name>CTP</name>
        <dbReference type="ChEBI" id="CHEBI:37563"/>
        <note>allosteric inhibitor</note>
    </ligand>
</feature>
<feature type="binding site" evidence="1">
    <location>
        <begin position="188"/>
        <end position="193"/>
    </location>
    <ligand>
        <name>UTP</name>
        <dbReference type="ChEBI" id="CHEBI:46398"/>
    </ligand>
</feature>
<feature type="binding site" evidence="1">
    <location>
        <position position="224"/>
    </location>
    <ligand>
        <name>CTP</name>
        <dbReference type="ChEBI" id="CHEBI:37563"/>
        <note>allosteric inhibitor</note>
    </ligand>
</feature>
<feature type="binding site" evidence="1">
    <location>
        <position position="224"/>
    </location>
    <ligand>
        <name>UTP</name>
        <dbReference type="ChEBI" id="CHEBI:46398"/>
    </ligand>
</feature>
<feature type="binding site" evidence="1">
    <location>
        <begin position="240"/>
        <end position="242"/>
    </location>
    <ligand>
        <name>ATP</name>
        <dbReference type="ChEBI" id="CHEBI:30616"/>
    </ligand>
</feature>
<feature type="binding site" evidence="1">
    <location>
        <position position="355"/>
    </location>
    <ligand>
        <name>L-glutamine</name>
        <dbReference type="ChEBI" id="CHEBI:58359"/>
    </ligand>
</feature>
<feature type="binding site" evidence="1">
    <location>
        <begin position="383"/>
        <end position="386"/>
    </location>
    <ligand>
        <name>L-glutamine</name>
        <dbReference type="ChEBI" id="CHEBI:58359"/>
    </ligand>
</feature>
<feature type="binding site" evidence="1">
    <location>
        <position position="406"/>
    </location>
    <ligand>
        <name>L-glutamine</name>
        <dbReference type="ChEBI" id="CHEBI:58359"/>
    </ligand>
</feature>
<feature type="binding site" evidence="1">
    <location>
        <position position="463"/>
    </location>
    <ligand>
        <name>L-glutamine</name>
        <dbReference type="ChEBI" id="CHEBI:58359"/>
    </ligand>
</feature>
<protein>
    <recommendedName>
        <fullName evidence="1">CTP synthase</fullName>
        <ecNumber evidence="1">6.3.4.2</ecNumber>
    </recommendedName>
    <alternativeName>
        <fullName evidence="1">Cytidine 5'-triphosphate synthase</fullName>
    </alternativeName>
    <alternativeName>
        <fullName evidence="1">Cytidine triphosphate synthetase</fullName>
        <shortName evidence="1">CTP synthetase</shortName>
        <shortName evidence="1">CTPS</shortName>
    </alternativeName>
    <alternativeName>
        <fullName evidence="1">UTP--ammonia ligase</fullName>
    </alternativeName>
</protein>
<evidence type="ECO:0000255" key="1">
    <source>
        <dbReference type="HAMAP-Rule" id="MF_01227"/>
    </source>
</evidence>
<proteinExistence type="evidence at protein level"/>
<reference key="1">
    <citation type="journal article" date="2001" name="Lancet">
        <title>Whole genome sequencing of meticillin-resistant Staphylococcus aureus.</title>
        <authorList>
            <person name="Kuroda M."/>
            <person name="Ohta T."/>
            <person name="Uchiyama I."/>
            <person name="Baba T."/>
            <person name="Yuzawa H."/>
            <person name="Kobayashi I."/>
            <person name="Cui L."/>
            <person name="Oguchi A."/>
            <person name="Aoki K."/>
            <person name="Nagai Y."/>
            <person name="Lian J.-Q."/>
            <person name="Ito T."/>
            <person name="Kanamori M."/>
            <person name="Matsumaru H."/>
            <person name="Maruyama A."/>
            <person name="Murakami H."/>
            <person name="Hosoyama A."/>
            <person name="Mizutani-Ui Y."/>
            <person name="Takahashi N.K."/>
            <person name="Sawano T."/>
            <person name="Inoue R."/>
            <person name="Kaito C."/>
            <person name="Sekimizu K."/>
            <person name="Hirakawa H."/>
            <person name="Kuhara S."/>
            <person name="Goto S."/>
            <person name="Yabuzaki J."/>
            <person name="Kanehisa M."/>
            <person name="Yamashita A."/>
            <person name="Oshima K."/>
            <person name="Furuya K."/>
            <person name="Yoshino C."/>
            <person name="Shiba T."/>
            <person name="Hattori M."/>
            <person name="Ogasawara N."/>
            <person name="Hayashi H."/>
            <person name="Hiramatsu K."/>
        </authorList>
    </citation>
    <scope>NUCLEOTIDE SEQUENCE [LARGE SCALE GENOMIC DNA]</scope>
    <source>
        <strain>N315</strain>
    </source>
</reference>
<reference key="2">
    <citation type="journal article" date="2005" name="J. Microbiol. Methods">
        <title>Correlation of proteomic and transcriptomic profiles of Staphylococcus aureus during the post-exponential phase of growth.</title>
        <authorList>
            <person name="Scherl A."/>
            <person name="Francois P."/>
            <person name="Bento M."/>
            <person name="Deshusses J.M."/>
            <person name="Charbonnier Y."/>
            <person name="Converset V."/>
            <person name="Huyghe A."/>
            <person name="Walter N."/>
            <person name="Hoogland C."/>
            <person name="Appel R.D."/>
            <person name="Sanchez J.-C."/>
            <person name="Zimmermann-Ivol C.G."/>
            <person name="Corthals G.L."/>
            <person name="Hochstrasser D.F."/>
            <person name="Schrenzel J."/>
        </authorList>
    </citation>
    <scope>IDENTIFICATION BY MASS SPECTROMETRY</scope>
    <source>
        <strain>N315</strain>
    </source>
</reference>
<reference key="3">
    <citation type="submission" date="2007-10" db="UniProtKB">
        <title>Shotgun proteomic analysis of total and membrane protein extracts of S. aureus strain N315.</title>
        <authorList>
            <person name="Vaezzadeh A.R."/>
            <person name="Deshusses J."/>
            <person name="Lescuyer P."/>
            <person name="Hochstrasser D.F."/>
        </authorList>
    </citation>
    <scope>IDENTIFICATION BY MASS SPECTROMETRY [LARGE SCALE ANALYSIS]</scope>
    <source>
        <strain>N315</strain>
    </source>
</reference>
<comment type="function">
    <text evidence="1">Catalyzes the ATP-dependent amination of UTP to CTP with either L-glutamine or ammonia as the source of nitrogen. Regulates intracellular CTP levels through interactions with the four ribonucleotide triphosphates.</text>
</comment>
<comment type="catalytic activity">
    <reaction evidence="1">
        <text>UTP + L-glutamine + ATP + H2O = CTP + L-glutamate + ADP + phosphate + 2 H(+)</text>
        <dbReference type="Rhea" id="RHEA:26426"/>
        <dbReference type="ChEBI" id="CHEBI:15377"/>
        <dbReference type="ChEBI" id="CHEBI:15378"/>
        <dbReference type="ChEBI" id="CHEBI:29985"/>
        <dbReference type="ChEBI" id="CHEBI:30616"/>
        <dbReference type="ChEBI" id="CHEBI:37563"/>
        <dbReference type="ChEBI" id="CHEBI:43474"/>
        <dbReference type="ChEBI" id="CHEBI:46398"/>
        <dbReference type="ChEBI" id="CHEBI:58359"/>
        <dbReference type="ChEBI" id="CHEBI:456216"/>
        <dbReference type="EC" id="6.3.4.2"/>
    </reaction>
</comment>
<comment type="catalytic activity">
    <reaction evidence="1">
        <text>L-glutamine + H2O = L-glutamate + NH4(+)</text>
        <dbReference type="Rhea" id="RHEA:15889"/>
        <dbReference type="ChEBI" id="CHEBI:15377"/>
        <dbReference type="ChEBI" id="CHEBI:28938"/>
        <dbReference type="ChEBI" id="CHEBI:29985"/>
        <dbReference type="ChEBI" id="CHEBI:58359"/>
    </reaction>
</comment>
<comment type="catalytic activity">
    <reaction evidence="1">
        <text>UTP + NH4(+) + ATP = CTP + ADP + phosphate + 2 H(+)</text>
        <dbReference type="Rhea" id="RHEA:16597"/>
        <dbReference type="ChEBI" id="CHEBI:15378"/>
        <dbReference type="ChEBI" id="CHEBI:28938"/>
        <dbReference type="ChEBI" id="CHEBI:30616"/>
        <dbReference type="ChEBI" id="CHEBI:37563"/>
        <dbReference type="ChEBI" id="CHEBI:43474"/>
        <dbReference type="ChEBI" id="CHEBI:46398"/>
        <dbReference type="ChEBI" id="CHEBI:456216"/>
    </reaction>
</comment>
<comment type="activity regulation">
    <text evidence="1">Allosterically activated by GTP, when glutamine is the substrate; GTP has no effect on the reaction when ammonia is the substrate. The allosteric effector GTP functions by stabilizing the protein conformation that binds the tetrahedral intermediate(s) formed during glutamine hydrolysis. Inhibited by the product CTP, via allosteric rather than competitive inhibition.</text>
</comment>
<comment type="pathway">
    <text evidence="1">Pyrimidine metabolism; CTP biosynthesis via de novo pathway; CTP from UDP: step 2/2.</text>
</comment>
<comment type="subunit">
    <text evidence="1">Homotetramer.</text>
</comment>
<comment type="miscellaneous">
    <text evidence="1">CTPSs have evolved a hybrid strategy for distinguishing between UTP and CTP. The overlapping regions of the product feedback inhibitory and substrate sites recognize a common feature in both compounds, the triphosphate moiety. To differentiate isosteric substrate and product pyrimidine rings, an additional pocket far from the expected kinase/ligase catalytic site, specifically recognizes the cytosine and ribose portions of the product inhibitor.</text>
</comment>
<comment type="similarity">
    <text evidence="1">Belongs to the CTP synthase family.</text>
</comment>
<organism>
    <name type="scientific">Staphylococcus aureus (strain N315)</name>
    <dbReference type="NCBI Taxonomy" id="158879"/>
    <lineage>
        <taxon>Bacteria</taxon>
        <taxon>Bacillati</taxon>
        <taxon>Bacillota</taxon>
        <taxon>Bacilli</taxon>
        <taxon>Bacillales</taxon>
        <taxon>Staphylococcaceae</taxon>
        <taxon>Staphylococcus</taxon>
    </lineage>
</organism>